<sequence length="1488" mass="170088">MIERGKFRSLTLINWNGFFARTFDLDELVTTLSGGNGAGKSTTMAAFVTALIPDLTLLHFRNTTEAGATSGSRDKGLHGKLKAGVCYSMLDTINSRHQRVVVGVRLQQVAGRDRKVDIKPFAIQGLPMSVQPTQLVTETLNERQARVLSLAELKDKLDEMEGVQFKQFNSITDYHSLMFDLGIIARRLRSASDRSKFYRLIEASLYGGISSAITRSLRDYLLPENSGVRKAFQDMEAALRENRLTLEAIRVTQSDRDLFKHLISEATDYVAADYMRHANERRVHLDQALAFRRELYTSRKQLAAEQYKHVDMARELGEHNGAEGSLEADYQAASDHLNLVQTALRQQEKIERYEADLEELQIRLEEQNEVVAEAAEMQDENEARAEAAELEVDELKSQLADYQQALDVQQTRAIQYNQAISALSRAKELCHLPDLTPESAAEWLDTFQAKEQEATEKLLSLEQKMSVAQTAHSQFEQAYQLVAAINGPLARSEAWDVARELLRDGVNQRHLAEQVQPLRMRLSELEQRLREQQEAERLLAEFCKRQGKNFDIDELEALHQELEARIASLSDSVSSASEQRMALRQEQEQLQSRIQHLMRRAPVWLAAQNSLNQLSEQCGEEFTSSQEVTEYLQQLLEREREAIVERDEVGARKNAVDEEIERLSQPGGAEDQRLNALAERFGGVLLSEIYDDVSLEDAPYFSALYGPSRHAIVVPDLSQIAEQLEGLTDCPEDLYLIEGDPQSFDDSVFSVDELEKAVVVKIADRQWRYSRFPSLPIFGRAARENRIESLHAEREVLSERFATLSFDVQKTQRLHQAFSRFIGSHLSVAFEDDPEAEIRRLNGRRVELERALATHESDNQQQRLQFEQAKEGVSALNRLLPRLNLLADETLADRVDEIQERLDEAQEAARFVQQYGNQLAKLEPVVSVLQSDPEQFEQLKEDYAWSQQMQRDARQQAFALAEVVERRAHFSYSDSAEMLSGNSDLNEKLRQRLEQAEAERTRAREALRSHAAQLSQYSQVLASLKSSYDTKKELLNDLQRELQDIGVRADSGAEERARQRRDELHAQLSNNRSRRNQLEKALTFCEAEMENLTRKLRKLERDYHEMREQVVTAKAGWCAVMRMVKDNGVERRLHRRELAYLSADELRSMSDKALGALRLAVADNEHLRDVLRLSEDPKRPERKIQFFVAVYQHLRERIRQDIIRTDDPVEAIEQMEIELSRLTEELTSREQKLAISSRSVANIIRKTIQREQNRIRMLNQGLQSVSFGQVNSVRLNVNVRETHATLLDVLSEQQEQHQDLFNSNRLTFSEALAKLYQRLNPQIDMGQRTPQTIGEELLDYRNYLEMEVEVNRGSDGWLRAESGALSTGEAIGTGMSILVMVVQSWEDEARRLRGKDISPCRLLFLDEAARLDARSIATLFELCERLQMQLIIAAPENISPEKGTTYKLVRKVFQNTEHVHVVGLRGFAPQLPETLPGTQTEDTPSEAS</sequence>
<gene>
    <name evidence="1" type="primary">mukB</name>
    <name type="ordered locus">SeHA_C1092</name>
</gene>
<proteinExistence type="inferred from homology"/>
<comment type="function">
    <text evidence="1">Plays a central role in chromosome condensation, segregation and cell cycle progression. Functions as a homodimer, which is essential for chromosome partition. Involved in negative DNA supercoiling in vivo, and by this means organize and compact chromosomes. May achieve or facilitate chromosome segregation by condensation DNA from both sides of a centrally located replisome during cell division.</text>
</comment>
<comment type="subunit">
    <text evidence="1">Homodimerization via its hinge domain. Binds to DNA via its C-terminal region. Interacts, and probably forms a ternary complex, with MukE and MukF via its C-terminal region. The complex formation is stimulated by calcium or magnesium. Interacts with tubulin-related protein FtsZ.</text>
</comment>
<comment type="subcellular location">
    <subcellularLocation>
        <location evidence="1">Cytoplasm</location>
        <location evidence="1">Nucleoid</location>
    </subcellularLocation>
    <text evidence="1">Restricted to the nucleoid region.</text>
</comment>
<comment type="domain">
    <text evidence="1">The hinge domain, which separates the large intramolecular coiled coil regions, allows the homodimerization, forming a V-shaped homodimer.</text>
</comment>
<comment type="similarity">
    <text evidence="1">Belongs to the SMC family. MukB subfamily.</text>
</comment>
<feature type="chain" id="PRO_1000187485" description="Chromosome partition protein MukB">
    <location>
        <begin position="1"/>
        <end position="1488"/>
    </location>
</feature>
<feature type="region of interest" description="Flexible hinge" evidence="1">
    <location>
        <begin position="666"/>
        <end position="783"/>
    </location>
</feature>
<feature type="region of interest" description="Disordered" evidence="2">
    <location>
        <begin position="1049"/>
        <end position="1074"/>
    </location>
</feature>
<feature type="coiled-coil region" evidence="1">
    <location>
        <begin position="326"/>
        <end position="418"/>
    </location>
</feature>
<feature type="coiled-coil region" evidence="1">
    <location>
        <begin position="444"/>
        <end position="472"/>
    </location>
</feature>
<feature type="coiled-coil region" evidence="1">
    <location>
        <begin position="509"/>
        <end position="602"/>
    </location>
</feature>
<feature type="coiled-coil region" evidence="1">
    <location>
        <begin position="835"/>
        <end position="923"/>
    </location>
</feature>
<feature type="coiled-coil region" evidence="1">
    <location>
        <begin position="977"/>
        <end position="1116"/>
    </location>
</feature>
<feature type="coiled-coil region" evidence="1">
    <location>
        <begin position="1209"/>
        <end position="1265"/>
    </location>
</feature>
<feature type="compositionally biased region" description="Basic and acidic residues" evidence="2">
    <location>
        <begin position="1051"/>
        <end position="1065"/>
    </location>
</feature>
<feature type="binding site" evidence="1">
    <location>
        <begin position="34"/>
        <end position="41"/>
    </location>
    <ligand>
        <name>ATP</name>
        <dbReference type="ChEBI" id="CHEBI:30616"/>
    </ligand>
</feature>
<keyword id="KW-0067">ATP-binding</keyword>
<keyword id="KW-0131">Cell cycle</keyword>
<keyword id="KW-0132">Cell division</keyword>
<keyword id="KW-0159">Chromosome partition</keyword>
<keyword id="KW-0175">Coiled coil</keyword>
<keyword id="KW-0963">Cytoplasm</keyword>
<keyword id="KW-0226">DNA condensation</keyword>
<keyword id="KW-0238">DNA-binding</keyword>
<keyword id="KW-0547">Nucleotide-binding</keyword>
<name>MUKB_SALHS</name>
<organism>
    <name type="scientific">Salmonella heidelberg (strain SL476)</name>
    <dbReference type="NCBI Taxonomy" id="454169"/>
    <lineage>
        <taxon>Bacteria</taxon>
        <taxon>Pseudomonadati</taxon>
        <taxon>Pseudomonadota</taxon>
        <taxon>Gammaproteobacteria</taxon>
        <taxon>Enterobacterales</taxon>
        <taxon>Enterobacteriaceae</taxon>
        <taxon>Salmonella</taxon>
    </lineage>
</organism>
<protein>
    <recommendedName>
        <fullName evidence="1">Chromosome partition protein MukB</fullName>
    </recommendedName>
    <alternativeName>
        <fullName evidence="1">Structural maintenance of chromosome-related protein</fullName>
    </alternativeName>
</protein>
<accession>B4TDR1</accession>
<evidence type="ECO:0000255" key="1">
    <source>
        <dbReference type="HAMAP-Rule" id="MF_01800"/>
    </source>
</evidence>
<evidence type="ECO:0000256" key="2">
    <source>
        <dbReference type="SAM" id="MobiDB-lite"/>
    </source>
</evidence>
<dbReference type="EMBL" id="CP001120">
    <property type="protein sequence ID" value="ACF69556.1"/>
    <property type="molecule type" value="Genomic_DNA"/>
</dbReference>
<dbReference type="RefSeq" id="WP_000572753.1">
    <property type="nucleotide sequence ID" value="NC_011083.1"/>
</dbReference>
<dbReference type="SMR" id="B4TDR1"/>
<dbReference type="KEGG" id="seh:SeHA_C1092"/>
<dbReference type="HOGENOM" id="CLU_004430_0_0_6"/>
<dbReference type="Proteomes" id="UP000001866">
    <property type="component" value="Chromosome"/>
</dbReference>
<dbReference type="GO" id="GO:0005737">
    <property type="term" value="C:cytoplasm"/>
    <property type="evidence" value="ECO:0007669"/>
    <property type="project" value="UniProtKB-UniRule"/>
</dbReference>
<dbReference type="GO" id="GO:0009295">
    <property type="term" value="C:nucleoid"/>
    <property type="evidence" value="ECO:0007669"/>
    <property type="project" value="UniProtKB-SubCell"/>
</dbReference>
<dbReference type="GO" id="GO:0005524">
    <property type="term" value="F:ATP binding"/>
    <property type="evidence" value="ECO:0007669"/>
    <property type="project" value="UniProtKB-UniRule"/>
</dbReference>
<dbReference type="GO" id="GO:0003677">
    <property type="term" value="F:DNA binding"/>
    <property type="evidence" value="ECO:0007669"/>
    <property type="project" value="UniProtKB-UniRule"/>
</dbReference>
<dbReference type="GO" id="GO:0051301">
    <property type="term" value="P:cell division"/>
    <property type="evidence" value="ECO:0007669"/>
    <property type="project" value="UniProtKB-KW"/>
</dbReference>
<dbReference type="GO" id="GO:0030261">
    <property type="term" value="P:chromosome condensation"/>
    <property type="evidence" value="ECO:0007669"/>
    <property type="project" value="UniProtKB-KW"/>
</dbReference>
<dbReference type="GO" id="GO:0007059">
    <property type="term" value="P:chromosome segregation"/>
    <property type="evidence" value="ECO:0007669"/>
    <property type="project" value="UniProtKB-UniRule"/>
</dbReference>
<dbReference type="GO" id="GO:0006260">
    <property type="term" value="P:DNA replication"/>
    <property type="evidence" value="ECO:0007669"/>
    <property type="project" value="UniProtKB-UniRule"/>
</dbReference>
<dbReference type="FunFam" id="3.30.70.3500:FF:000001">
    <property type="entry name" value="Chromosome partition protein MukB"/>
    <property type="match status" value="1"/>
</dbReference>
<dbReference type="FunFam" id="3.40.1140.10:FF:000001">
    <property type="entry name" value="Chromosome partition protein MukB"/>
    <property type="match status" value="1"/>
</dbReference>
<dbReference type="FunFam" id="3.40.1140.10:FF:000002">
    <property type="entry name" value="Chromosome partition protein MukB"/>
    <property type="match status" value="1"/>
</dbReference>
<dbReference type="Gene3D" id="1.10.287.1490">
    <property type="match status" value="1"/>
</dbReference>
<dbReference type="Gene3D" id="1.20.58.850">
    <property type="match status" value="1"/>
</dbReference>
<dbReference type="Gene3D" id="3.40.1140.10">
    <property type="match status" value="2"/>
</dbReference>
<dbReference type="Gene3D" id="1.20.5.420">
    <property type="entry name" value="Immunoglobulin FC, subunit C"/>
    <property type="match status" value="1"/>
</dbReference>
<dbReference type="Gene3D" id="3.30.70.3500">
    <property type="entry name" value="MukB, hinge domain"/>
    <property type="match status" value="1"/>
</dbReference>
<dbReference type="HAMAP" id="MF_01800">
    <property type="entry name" value="MukB"/>
    <property type="match status" value="1"/>
</dbReference>
<dbReference type="InterPro" id="IPR012090">
    <property type="entry name" value="MukB"/>
</dbReference>
<dbReference type="InterPro" id="IPR050308">
    <property type="entry name" value="MukB/SMC"/>
</dbReference>
<dbReference type="InterPro" id="IPR032520">
    <property type="entry name" value="MukB_hinge"/>
</dbReference>
<dbReference type="InterPro" id="IPR042501">
    <property type="entry name" value="MukB_hinge_sf"/>
</dbReference>
<dbReference type="InterPro" id="IPR007406">
    <property type="entry name" value="MukB_N_dom"/>
</dbReference>
<dbReference type="InterPro" id="IPR027417">
    <property type="entry name" value="P-loop_NTPase"/>
</dbReference>
<dbReference type="NCBIfam" id="NF003422">
    <property type="entry name" value="PRK04863.1"/>
    <property type="match status" value="1"/>
</dbReference>
<dbReference type="PANTHER" id="PTHR42963">
    <property type="entry name" value="CHROMOSOME PARTITION PROTEIN MUKB"/>
    <property type="match status" value="1"/>
</dbReference>
<dbReference type="PANTHER" id="PTHR42963:SF1">
    <property type="entry name" value="DUF4476 DOMAIN-CONTAINING PROTEIN"/>
    <property type="match status" value="1"/>
</dbReference>
<dbReference type="Pfam" id="PF04310">
    <property type="entry name" value="MukB"/>
    <property type="match status" value="1"/>
</dbReference>
<dbReference type="Pfam" id="PF16330">
    <property type="entry name" value="MukB_hinge"/>
    <property type="match status" value="1"/>
</dbReference>
<dbReference type="Pfam" id="PF13558">
    <property type="entry name" value="SbcC_Walker_B"/>
    <property type="match status" value="1"/>
</dbReference>
<dbReference type="PIRSF" id="PIRSF005246">
    <property type="entry name" value="MukB"/>
    <property type="match status" value="1"/>
</dbReference>
<dbReference type="SUPFAM" id="SSF52540">
    <property type="entry name" value="P-loop containing nucleoside triphosphate hydrolases"/>
    <property type="match status" value="2"/>
</dbReference>
<reference key="1">
    <citation type="journal article" date="2011" name="J. Bacteriol.">
        <title>Comparative genomics of 28 Salmonella enterica isolates: evidence for CRISPR-mediated adaptive sublineage evolution.</title>
        <authorList>
            <person name="Fricke W.F."/>
            <person name="Mammel M.K."/>
            <person name="McDermott P.F."/>
            <person name="Tartera C."/>
            <person name="White D.G."/>
            <person name="Leclerc J.E."/>
            <person name="Ravel J."/>
            <person name="Cebula T.A."/>
        </authorList>
    </citation>
    <scope>NUCLEOTIDE SEQUENCE [LARGE SCALE GENOMIC DNA]</scope>
    <source>
        <strain>SL476</strain>
    </source>
</reference>